<comment type="function">
    <text evidence="1 4">Sodium permeable non-voltage-sensitive ion channel (By similarity). Involved in the activity-dependent removal of selected presynaptic proteins, such as synaptobrevin snb-1, and Ras-related rab-3, in the remodeling of GABAergic motor neurons (PubMed:34045310).</text>
</comment>
<comment type="subcellular location">
    <subcellularLocation>
        <location evidence="2">Membrane</location>
        <topology evidence="2">Multi-pass membrane protein</topology>
    </subcellularLocation>
</comment>
<comment type="alternative products">
    <event type="alternative splicing"/>
    <isoform>
        <id>Q21974-1</id>
        <name evidence="6">a</name>
        <sequence type="displayed"/>
    </isoform>
    <isoform>
        <id>Q21974-2</id>
        <name evidence="7">b</name>
        <sequence type="described" ref="VSP_061639"/>
    </isoform>
    <isoform>
        <id>Q21974-3</id>
        <name evidence="8">c</name>
        <sequence type="described" ref="VSP_061640"/>
    </isoform>
    <isoform>
        <id>Q21974-4</id>
        <name evidence="9">d</name>
        <sequence type="described" ref="VSP_061638"/>
    </isoform>
</comment>
<comment type="developmental stage">
    <text evidence="4">Expressed in puncta in dorsal D (DD) motor neurons and in adjacent DA and DB cholinergic motor neurons in the larval stage L1 ventral nerve cord.</text>
</comment>
<comment type="similarity">
    <text evidence="5">Belongs to the amiloride-sensitive sodium channel (TC 1.A.6) family.</text>
</comment>
<proteinExistence type="evidence at transcript level"/>
<organism>
    <name type="scientific">Caenorhabditis elegans</name>
    <dbReference type="NCBI Taxonomy" id="6239"/>
    <lineage>
        <taxon>Eukaryota</taxon>
        <taxon>Metazoa</taxon>
        <taxon>Ecdysozoa</taxon>
        <taxon>Nematoda</taxon>
        <taxon>Chromadorea</taxon>
        <taxon>Rhabditida</taxon>
        <taxon>Rhabditina</taxon>
        <taxon>Rhabditomorpha</taxon>
        <taxon>Rhabditoidea</taxon>
        <taxon>Rhabditidae</taxon>
        <taxon>Peloderinae</taxon>
        <taxon>Caenorhabditis</taxon>
    </lineage>
</organism>
<keyword id="KW-0025">Alternative splicing</keyword>
<keyword id="KW-0325">Glycoprotein</keyword>
<keyword id="KW-0407">Ion channel</keyword>
<keyword id="KW-0406">Ion transport</keyword>
<keyword id="KW-0472">Membrane</keyword>
<keyword id="KW-1185">Reference proteome</keyword>
<keyword id="KW-0915">Sodium</keyword>
<keyword id="KW-0894">Sodium channel</keyword>
<keyword id="KW-0739">Sodium transport</keyword>
<keyword id="KW-0812">Transmembrane</keyword>
<keyword id="KW-1133">Transmembrane helix</keyword>
<keyword id="KW-0813">Transport</keyword>
<name>UNC8_CAEEL</name>
<protein>
    <recommendedName>
        <fullName evidence="6">Degenerin unc-8</fullName>
    </recommendedName>
    <alternativeName>
        <fullName evidence="6">Putative ligand-gated sodium channel unc-8</fullName>
    </alternativeName>
    <alternativeName>
        <fullName evidence="6">Uncoordinated protein 8</fullName>
    </alternativeName>
</protein>
<accession>Q21974</accession>
<accession>U4PAS5</accession>
<accession>U4PB70</accession>
<accession>U4PE10</accession>
<feature type="chain" id="PRO_0000181289" description="Degenerin unc-8">
    <location>
        <begin position="1"/>
        <end position="777"/>
    </location>
</feature>
<feature type="topological domain" description="Cytoplasmic" evidence="2">
    <location>
        <begin position="1"/>
        <end position="128"/>
    </location>
</feature>
<feature type="transmembrane region" description="Helical" evidence="2">
    <location>
        <begin position="129"/>
        <end position="149"/>
    </location>
</feature>
<feature type="topological domain" description="Extracellular" evidence="2">
    <location>
        <begin position="150"/>
        <end position="689"/>
    </location>
</feature>
<feature type="transmembrane region" description="Helical" evidence="2">
    <location>
        <begin position="690"/>
        <end position="710"/>
    </location>
</feature>
<feature type="topological domain" description="Cytoplasmic" evidence="2">
    <location>
        <begin position="711"/>
        <end position="777"/>
    </location>
</feature>
<feature type="region of interest" description="Disordered" evidence="3">
    <location>
        <begin position="752"/>
        <end position="777"/>
    </location>
</feature>
<feature type="glycosylation site" description="N-linked (GlcNAc...) asparagine" evidence="2">
    <location>
        <position position="274"/>
    </location>
</feature>
<feature type="glycosylation site" description="N-linked (GlcNAc...) asparagine" evidence="2">
    <location>
        <position position="319"/>
    </location>
</feature>
<feature type="glycosylation site" description="N-linked (GlcNAc...) asparagine" evidence="2">
    <location>
        <position position="357"/>
    </location>
</feature>
<feature type="glycosylation site" description="N-linked (GlcNAc...) asparagine" evidence="2">
    <location>
        <position position="411"/>
    </location>
</feature>
<feature type="glycosylation site" description="N-linked (GlcNAc...) asparagine" evidence="2">
    <location>
        <position position="453"/>
    </location>
</feature>
<feature type="glycosylation site" description="N-linked (GlcNAc...) asparagine" evidence="2">
    <location>
        <position position="533"/>
    </location>
</feature>
<feature type="glycosylation site" description="N-linked (GlcNAc...) asparagine" evidence="2">
    <location>
        <position position="597"/>
    </location>
</feature>
<feature type="splice variant" id="VSP_061638" description="In isoform d." evidence="5">
    <location>
        <begin position="1"/>
        <end position="40"/>
    </location>
</feature>
<feature type="splice variant" id="VSP_061639" description="In isoform b." evidence="5">
    <original>MSPLLTWNLICVSSRWYTILCLKNKVKFWLGT</original>
    <variation>MSARSSGSMSTASRMTKGSPERLVSATSESK</variation>
    <location>
        <begin position="1"/>
        <end position="32"/>
    </location>
</feature>
<feature type="splice variant" id="VSP_061640" description="In isoform c." evidence="5">
    <original>SPLLTWNLICVSSRWYTILCLKNKVKFWLGT</original>
    <variation>IPKYTFPRRKDAIRHKIRKNVTFADVELDMCQ</variation>
    <location>
        <begin position="2"/>
        <end position="32"/>
    </location>
</feature>
<dbReference type="EMBL" id="U76402">
    <property type="protein sequence ID" value="AAB39734.1"/>
    <property type="molecule type" value="mRNA"/>
</dbReference>
<dbReference type="EMBL" id="FO080842">
    <property type="protein sequence ID" value="CCD67152.1"/>
    <property type="molecule type" value="Genomic_DNA"/>
</dbReference>
<dbReference type="EMBL" id="BX284604">
    <property type="protein sequence ID" value="CDH92989.1"/>
    <property type="molecule type" value="Genomic_DNA"/>
</dbReference>
<dbReference type="EMBL" id="BX284604">
    <property type="protein sequence ID" value="CDH92990.1"/>
    <property type="molecule type" value="Genomic_DNA"/>
</dbReference>
<dbReference type="EMBL" id="BX284604">
    <property type="protein sequence ID" value="CDH92991.1"/>
    <property type="molecule type" value="Genomic_DNA"/>
</dbReference>
<dbReference type="PIR" id="T16737">
    <property type="entry name" value="T16737"/>
</dbReference>
<dbReference type="RefSeq" id="NP_001294292.1">
    <molecule id="Q21974-2"/>
    <property type="nucleotide sequence ID" value="NM_001307363.3"/>
</dbReference>
<dbReference type="RefSeq" id="NP_001294293.1">
    <molecule id="Q21974-3"/>
    <property type="nucleotide sequence ID" value="NM_001307364.3"/>
</dbReference>
<dbReference type="RefSeq" id="NP_001294294.1">
    <molecule id="Q21974-4"/>
    <property type="nucleotide sequence ID" value="NM_001307365.3"/>
</dbReference>
<dbReference type="RefSeq" id="NP_501138.1">
    <molecule id="Q21974-1"/>
    <property type="nucleotide sequence ID" value="NM_068737.2"/>
</dbReference>
<dbReference type="BioGRID" id="42613">
    <property type="interactions" value="1"/>
</dbReference>
<dbReference type="FunCoup" id="Q21974">
    <property type="interactions" value="19"/>
</dbReference>
<dbReference type="STRING" id="6239.R13A1.4c.1"/>
<dbReference type="TCDB" id="1.A.6.2.4">
    <property type="family name" value="the epithelial na(+) channel (enac) family"/>
</dbReference>
<dbReference type="GlyCosmos" id="Q21974">
    <property type="glycosylation" value="7 sites, No reported glycans"/>
</dbReference>
<dbReference type="PaxDb" id="6239-R13A1.4c"/>
<dbReference type="EnsemblMetazoa" id="R13A1.4a.1">
    <molecule id="Q21974-1"/>
    <property type="protein sequence ID" value="R13A1.4a.1"/>
    <property type="gene ID" value="WBGene00006748"/>
</dbReference>
<dbReference type="EnsemblMetazoa" id="R13A1.4b.1">
    <molecule id="Q21974-2"/>
    <property type="protein sequence ID" value="R13A1.4b.1"/>
    <property type="gene ID" value="WBGene00006748"/>
</dbReference>
<dbReference type="EnsemblMetazoa" id="R13A1.4c.1">
    <molecule id="Q21974-3"/>
    <property type="protein sequence ID" value="R13A1.4c.1"/>
    <property type="gene ID" value="WBGene00006748"/>
</dbReference>
<dbReference type="EnsemblMetazoa" id="R13A1.4d.1">
    <molecule id="Q21974-4"/>
    <property type="protein sequence ID" value="R13A1.4d.1"/>
    <property type="gene ID" value="WBGene00006748"/>
</dbReference>
<dbReference type="GeneID" id="177494"/>
<dbReference type="KEGG" id="cel:CELE_R13A1.4"/>
<dbReference type="UCSC" id="R13A1.4">
    <molecule id="Q21974-1"/>
    <property type="organism name" value="c. elegans"/>
</dbReference>
<dbReference type="AGR" id="WB:WBGene00006748"/>
<dbReference type="CTD" id="177494"/>
<dbReference type="WormBase" id="R13A1.4a">
    <molecule id="Q21974-1"/>
    <property type="protein sequence ID" value="CE26381"/>
    <property type="gene ID" value="WBGene00006748"/>
    <property type="gene designation" value="unc-8"/>
</dbReference>
<dbReference type="WormBase" id="R13A1.4b">
    <molecule id="Q21974-2"/>
    <property type="protein sequence ID" value="CE48967"/>
    <property type="gene ID" value="WBGene00006748"/>
    <property type="gene designation" value="unc-8"/>
</dbReference>
<dbReference type="WormBase" id="R13A1.4c">
    <molecule id="Q21974-3"/>
    <property type="protein sequence ID" value="CE49123"/>
    <property type="gene ID" value="WBGene00006748"/>
    <property type="gene designation" value="unc-8"/>
</dbReference>
<dbReference type="WormBase" id="R13A1.4d">
    <molecule id="Q21974-4"/>
    <property type="protein sequence ID" value="CE04840"/>
    <property type="gene ID" value="WBGene00006748"/>
    <property type="gene designation" value="unc-8"/>
</dbReference>
<dbReference type="eggNOG" id="KOG4294">
    <property type="taxonomic scope" value="Eukaryota"/>
</dbReference>
<dbReference type="InParanoid" id="Q21974"/>
<dbReference type="OMA" id="KKYPNWM"/>
<dbReference type="OrthoDB" id="6502088at2759"/>
<dbReference type="PhylomeDB" id="Q21974"/>
<dbReference type="Reactome" id="R-CEL-2672351">
    <property type="pathway name" value="Stimuli-sensing channels"/>
</dbReference>
<dbReference type="Reactome" id="R-CEL-9730628">
    <property type="pathway name" value="Sensory perception of salty taste"/>
</dbReference>
<dbReference type="PRO" id="PR:Q21974"/>
<dbReference type="Proteomes" id="UP000001940">
    <property type="component" value="Chromosome IV"/>
</dbReference>
<dbReference type="Bgee" id="WBGene00006748">
    <property type="expression patterns" value="Expressed in pharyngeal muscle cell (C elegans) and 3 other cell types or tissues"/>
</dbReference>
<dbReference type="ExpressionAtlas" id="Q21974">
    <property type="expression patterns" value="baseline and differential"/>
</dbReference>
<dbReference type="GO" id="GO:0043025">
    <property type="term" value="C:neuronal cell body"/>
    <property type="evidence" value="ECO:0000314"/>
    <property type="project" value="WormBase"/>
</dbReference>
<dbReference type="GO" id="GO:0005886">
    <property type="term" value="C:plasma membrane"/>
    <property type="evidence" value="ECO:0000318"/>
    <property type="project" value="GO_Central"/>
</dbReference>
<dbReference type="GO" id="GO:0015280">
    <property type="term" value="F:ligand-gated sodium channel activity"/>
    <property type="evidence" value="ECO:0000318"/>
    <property type="project" value="GO_Central"/>
</dbReference>
<dbReference type="GO" id="GO:0005261">
    <property type="term" value="F:monoatomic cation channel activity"/>
    <property type="evidence" value="ECO:0000250"/>
    <property type="project" value="WormBase"/>
</dbReference>
<dbReference type="GO" id="GO:0040011">
    <property type="term" value="P:locomotion"/>
    <property type="evidence" value="ECO:0000315"/>
    <property type="project" value="WormBase"/>
</dbReference>
<dbReference type="GO" id="GO:0006812">
    <property type="term" value="P:monoatomic cation transport"/>
    <property type="evidence" value="ECO:0000250"/>
    <property type="project" value="WormBase"/>
</dbReference>
<dbReference type="GO" id="GO:0016322">
    <property type="term" value="P:neuron remodeling"/>
    <property type="evidence" value="ECO:0000315"/>
    <property type="project" value="UniProtKB"/>
</dbReference>
<dbReference type="GO" id="GO:0035725">
    <property type="term" value="P:sodium ion transmembrane transport"/>
    <property type="evidence" value="ECO:0000318"/>
    <property type="project" value="GO_Central"/>
</dbReference>
<dbReference type="FunFam" id="1.10.287.770:FF:000001">
    <property type="entry name" value="Acid-sensing ion channel subunit 1"/>
    <property type="match status" value="1"/>
</dbReference>
<dbReference type="FunFam" id="2.60.470.10:FF:000004">
    <property type="entry name" value="Degenerin unc-8"/>
    <property type="match status" value="1"/>
</dbReference>
<dbReference type="Gene3D" id="2.60.470.10">
    <property type="entry name" value="Acid-sensing ion channels like domains"/>
    <property type="match status" value="1"/>
</dbReference>
<dbReference type="Gene3D" id="1.10.287.770">
    <property type="entry name" value="YojJ-like"/>
    <property type="match status" value="1"/>
</dbReference>
<dbReference type="InterPro" id="IPR004726">
    <property type="entry name" value="Deg-1"/>
</dbReference>
<dbReference type="InterPro" id="IPR001873">
    <property type="entry name" value="ENaC"/>
</dbReference>
<dbReference type="InterPro" id="IPR020903">
    <property type="entry name" value="ENaC_CS"/>
</dbReference>
<dbReference type="NCBIfam" id="TIGR00867">
    <property type="entry name" value="deg-1"/>
    <property type="match status" value="1"/>
</dbReference>
<dbReference type="PANTHER" id="PTHR11690">
    <property type="entry name" value="AMILORIDE-SENSITIVE SODIUM CHANNEL-RELATED"/>
    <property type="match status" value="1"/>
</dbReference>
<dbReference type="PANTHER" id="PTHR11690:SF242">
    <property type="entry name" value="DEGENERIN UNC-8"/>
    <property type="match status" value="1"/>
</dbReference>
<dbReference type="Pfam" id="PF00858">
    <property type="entry name" value="ASC"/>
    <property type="match status" value="1"/>
</dbReference>
<dbReference type="PRINTS" id="PR01078">
    <property type="entry name" value="AMINACHANNEL"/>
</dbReference>
<dbReference type="PROSITE" id="PS01206">
    <property type="entry name" value="ASC"/>
    <property type="match status" value="1"/>
</dbReference>
<gene>
    <name evidence="6" type="primary">unc-8</name>
    <name evidence="6" type="ORF">R13A1.4</name>
</gene>
<evidence type="ECO:0000250" key="1">
    <source>
        <dbReference type="UniProtKB" id="P51168"/>
    </source>
</evidence>
<evidence type="ECO:0000255" key="2"/>
<evidence type="ECO:0000256" key="3">
    <source>
        <dbReference type="SAM" id="MobiDB-lite"/>
    </source>
</evidence>
<evidence type="ECO:0000269" key="4">
    <source>
    </source>
</evidence>
<evidence type="ECO:0000305" key="5"/>
<evidence type="ECO:0000312" key="6">
    <source>
        <dbReference type="WormBase" id="R13A1.4a"/>
    </source>
</evidence>
<evidence type="ECO:0000312" key="7">
    <source>
        <dbReference type="WormBase" id="R13A1.4b"/>
    </source>
</evidence>
<evidence type="ECO:0000312" key="8">
    <source>
        <dbReference type="WormBase" id="R13A1.4c"/>
    </source>
</evidence>
<evidence type="ECO:0000312" key="9">
    <source>
        <dbReference type="WormBase" id="R13A1.4d"/>
    </source>
</evidence>
<reference key="1">
    <citation type="submission" date="1997-01" db="EMBL/GenBank/DDBJ databases">
        <authorList>
            <person name="Tavernarakis N."/>
            <person name="Shreffler W."/>
            <person name="Wang S.L."/>
            <person name="Driscoll M."/>
        </authorList>
    </citation>
    <scope>NUCLEOTIDE SEQUENCE [MRNA]</scope>
    <source>
        <strain>Bristol N2</strain>
    </source>
</reference>
<reference key="2">
    <citation type="journal article" date="1998" name="Science">
        <title>Genome sequence of the nematode C. elegans: a platform for investigating biology.</title>
        <authorList>
            <consortium name="The C. elegans sequencing consortium"/>
        </authorList>
    </citation>
    <scope>NUCLEOTIDE SEQUENCE [LARGE SCALE GENOMIC DNA]</scope>
    <source>
        <strain>Bristol N2</strain>
    </source>
</reference>
<reference key="3">
    <citation type="journal article" date="2021" name="J. Neurosci.">
        <title>Transcriptional control of parallel-acting pathways that remove specific presynaptic proteins in remodeling neurons.</title>
        <authorList>
            <person name="Miller-Fleming T.W."/>
            <person name="Cuentas-Condori A."/>
            <person name="Manning L."/>
            <person name="Palumbos S."/>
            <person name="Richmond J.E."/>
            <person name="Miller D.M. III"/>
        </authorList>
    </citation>
    <scope>FUNCTION</scope>
    <scope>DEVELOPMENTAL STAGE</scope>
</reference>
<sequence>MSPLLTWNLICVSSRWYTILCLKNKVKFWLGTRLVHEPESMESRSSPYIRPSPYAGGVHPHFEEEDDRSKLHASALYSERRTSSRKSLRSQKIDYHTTTIKSLWFDFCARTSSHGIPYVATSSFFGRYVWAALFMCMLMAFLLQTYWTMSEYLQYRTIIEMQLQFEAAAFPAATVCNLNAFKYSELTQYEEIKEGFDYWERVINARMMSDSMKPGGDILEAISVRKKRSKSRDQLLFPIDDEDLEGAVYQPVFVRCTCMNMEQCVPNRNPLEVNASICMCFEDVTRGLIWPCYPTSVWTVKKCSGCSISNTCPDPDGPNASKQIAKHNSPLPCLCQSISHHCMVHPKDEIRWWNPNNYTVYSVTEPPTTEITETEEAFGLSDLKDAGAITTQTKENLIFLVAALPRETRRNLSYTLNEFVLRCSFNSKDCSMERDFKLHVDPEYGNCYTFNFNDSVELKNSRAGPMYGLRLLLNVHQSDYMPTTEAAGVRLVVHEQDQEPFPDTFGYSAPTGFISSFGLKTKELHRLSAPWGNCSDTFRPVPYIYNEHYSPEGCHRNCFQLKVLEICGCGDPRFPLPSEEHRHCNAKSKIDRQCLSNLTSDSGGYHHLHEQCECRQPCHEKVFETAYSASAWPSQNFKIGTDCPAVSDIFNDTEACTEYYRQNTAYIEIYYEQLNFESLKETAGYTLVNLFSDFGGNIGLWIGFSVITFAEFAELFCEICKLMYFKGIVYVQKKMQGKEYTSSSLMHIDFLQRSPKKSQPGEDEVSTNESTKELMSK</sequence>